<accession>Q4L563</accession>
<keyword id="KW-1003">Cell membrane</keyword>
<keyword id="KW-0472">Membrane</keyword>
<keyword id="KW-0560">Oxidoreductase</keyword>
<keyword id="KW-0812">Transmembrane</keyword>
<keyword id="KW-1133">Transmembrane helix</keyword>
<protein>
    <recommendedName>
        <fullName>Probable quinol oxidase subunit 3</fullName>
        <ecNumber>1.10.3.-</ecNumber>
    </recommendedName>
    <alternativeName>
        <fullName>Quinol oxidase polypeptide III</fullName>
    </alternativeName>
</protein>
<organism>
    <name type="scientific">Staphylococcus haemolyticus (strain JCSC1435)</name>
    <dbReference type="NCBI Taxonomy" id="279808"/>
    <lineage>
        <taxon>Bacteria</taxon>
        <taxon>Bacillati</taxon>
        <taxon>Bacillota</taxon>
        <taxon>Bacilli</taxon>
        <taxon>Bacillales</taxon>
        <taxon>Staphylococcaceae</taxon>
        <taxon>Staphylococcus</taxon>
    </lineage>
</organism>
<comment type="function">
    <text evidence="1">Catalyzes quinol oxidation with the concomitant reduction of oxygen to water.</text>
</comment>
<comment type="catalytic activity">
    <reaction>
        <text>2 a quinol + O2 = 2 a quinone + 2 H2O</text>
        <dbReference type="Rhea" id="RHEA:55376"/>
        <dbReference type="ChEBI" id="CHEBI:15377"/>
        <dbReference type="ChEBI" id="CHEBI:15379"/>
        <dbReference type="ChEBI" id="CHEBI:24646"/>
        <dbReference type="ChEBI" id="CHEBI:132124"/>
    </reaction>
</comment>
<comment type="subcellular location">
    <subcellularLocation>
        <location evidence="1">Cell membrane</location>
        <topology evidence="1">Multi-pass membrane protein</topology>
    </subcellularLocation>
</comment>
<comment type="similarity">
    <text evidence="3">Belongs to the cytochrome c oxidase subunit 3 family.</text>
</comment>
<evidence type="ECO:0000250" key="1"/>
<evidence type="ECO:0000255" key="2"/>
<evidence type="ECO:0000305" key="3"/>
<gene>
    <name type="primary">qoxC</name>
    <name type="ordered locus">SH1903</name>
</gene>
<sequence>MSHDTNTVDSRTHEGQLNKLGFWIFLTAEFSLFGTLFATLLTLQHGGDYAGKMTTELFELPLVLIMTFALLISSYTCGISIYYMRKEKQNLMMFWMILTVLLGLVFVGFEIYEFAHYVSEGVTPQIGSYWSSFFILLGTHGAHVSLGIGWIICLLIQVATRGLNKYNAPKLFIVSLYWHFLDVVWIFIFTAVYMIGMVYSG</sequence>
<feature type="chain" id="PRO_0000275895" description="Probable quinol oxidase subunit 3">
    <location>
        <begin position="1"/>
        <end position="201"/>
    </location>
</feature>
<feature type="transmembrane region" description="Helical" evidence="2">
    <location>
        <begin position="20"/>
        <end position="40"/>
    </location>
</feature>
<feature type="transmembrane region" description="Helical" evidence="2">
    <location>
        <begin position="62"/>
        <end position="82"/>
    </location>
</feature>
<feature type="transmembrane region" description="Helical" evidence="2">
    <location>
        <begin position="91"/>
        <end position="111"/>
    </location>
</feature>
<feature type="transmembrane region" description="Helical" evidence="2">
    <location>
        <begin position="133"/>
        <end position="153"/>
    </location>
</feature>
<feature type="transmembrane region" description="Helical" evidence="2">
    <location>
        <begin position="172"/>
        <end position="192"/>
    </location>
</feature>
<reference key="1">
    <citation type="journal article" date="2005" name="J. Bacteriol.">
        <title>Whole-genome sequencing of Staphylococcus haemolyticus uncovers the extreme plasticity of its genome and the evolution of human-colonizing staphylococcal species.</title>
        <authorList>
            <person name="Takeuchi F."/>
            <person name="Watanabe S."/>
            <person name="Baba T."/>
            <person name="Yuzawa H."/>
            <person name="Ito T."/>
            <person name="Morimoto Y."/>
            <person name="Kuroda M."/>
            <person name="Cui L."/>
            <person name="Takahashi M."/>
            <person name="Ankai A."/>
            <person name="Baba S."/>
            <person name="Fukui S."/>
            <person name="Lee J.C."/>
            <person name="Hiramatsu K."/>
        </authorList>
    </citation>
    <scope>NUCLEOTIDE SEQUENCE [LARGE SCALE GENOMIC DNA]</scope>
    <source>
        <strain>JCSC1435</strain>
    </source>
</reference>
<dbReference type="EC" id="1.10.3.-"/>
<dbReference type="EMBL" id="AP006716">
    <property type="protein sequence ID" value="BAE05212.1"/>
    <property type="molecule type" value="Genomic_DNA"/>
</dbReference>
<dbReference type="RefSeq" id="WP_011276175.1">
    <property type="nucleotide sequence ID" value="NC_007168.1"/>
</dbReference>
<dbReference type="SMR" id="Q4L563"/>
<dbReference type="GeneID" id="93781267"/>
<dbReference type="KEGG" id="sha:SH1903"/>
<dbReference type="eggNOG" id="COG1845">
    <property type="taxonomic scope" value="Bacteria"/>
</dbReference>
<dbReference type="HOGENOM" id="CLU_044071_3_2_9"/>
<dbReference type="OrthoDB" id="9810850at2"/>
<dbReference type="Proteomes" id="UP000000543">
    <property type="component" value="Chromosome"/>
</dbReference>
<dbReference type="GO" id="GO:0005886">
    <property type="term" value="C:plasma membrane"/>
    <property type="evidence" value="ECO:0007669"/>
    <property type="project" value="UniProtKB-SubCell"/>
</dbReference>
<dbReference type="GO" id="GO:0004129">
    <property type="term" value="F:cytochrome-c oxidase activity"/>
    <property type="evidence" value="ECO:0007669"/>
    <property type="project" value="InterPro"/>
</dbReference>
<dbReference type="GO" id="GO:0019646">
    <property type="term" value="P:aerobic electron transport chain"/>
    <property type="evidence" value="ECO:0007669"/>
    <property type="project" value="InterPro"/>
</dbReference>
<dbReference type="GO" id="GO:0042773">
    <property type="term" value="P:ATP synthesis coupled electron transport"/>
    <property type="evidence" value="ECO:0007669"/>
    <property type="project" value="InterPro"/>
</dbReference>
<dbReference type="CDD" id="cd02863">
    <property type="entry name" value="Ubiquinol_oxidase_III"/>
    <property type="match status" value="1"/>
</dbReference>
<dbReference type="FunFam" id="1.20.120.80:FF:000001">
    <property type="entry name" value="Cytochrome (Ubi)quinol oxidase subunit III"/>
    <property type="match status" value="1"/>
</dbReference>
<dbReference type="Gene3D" id="1.20.120.80">
    <property type="entry name" value="Cytochrome c oxidase, subunit III, four-helix bundle"/>
    <property type="match status" value="1"/>
</dbReference>
<dbReference type="InterPro" id="IPR024791">
    <property type="entry name" value="Cyt_c/ubiquinol_Oxase_su3"/>
</dbReference>
<dbReference type="InterPro" id="IPR000298">
    <property type="entry name" value="Cyt_c_oxidase-like_su3"/>
</dbReference>
<dbReference type="InterPro" id="IPR035973">
    <property type="entry name" value="Cyt_c_oxidase_su3-like_sf"/>
</dbReference>
<dbReference type="InterPro" id="IPR013833">
    <property type="entry name" value="Cyt_c_oxidase_su3_a-hlx"/>
</dbReference>
<dbReference type="InterPro" id="IPR014246">
    <property type="entry name" value="QoxC"/>
</dbReference>
<dbReference type="InterPro" id="IPR033946">
    <property type="entry name" value="Ubiquinol_oxase_su3_dom"/>
</dbReference>
<dbReference type="NCBIfam" id="TIGR02897">
    <property type="entry name" value="QoxC"/>
    <property type="match status" value="1"/>
</dbReference>
<dbReference type="PANTHER" id="PTHR11403:SF2">
    <property type="entry name" value="CYTOCHROME BO(3) UBIQUINOL OXIDASE SUBUNIT 3"/>
    <property type="match status" value="1"/>
</dbReference>
<dbReference type="PANTHER" id="PTHR11403">
    <property type="entry name" value="CYTOCHROME C OXIDASE SUBUNIT III"/>
    <property type="match status" value="1"/>
</dbReference>
<dbReference type="Pfam" id="PF00510">
    <property type="entry name" value="COX3"/>
    <property type="match status" value="1"/>
</dbReference>
<dbReference type="SUPFAM" id="SSF81452">
    <property type="entry name" value="Cytochrome c oxidase subunit III-like"/>
    <property type="match status" value="1"/>
</dbReference>
<dbReference type="PROSITE" id="PS50253">
    <property type="entry name" value="COX3"/>
    <property type="match status" value="1"/>
</dbReference>
<proteinExistence type="inferred from homology"/>
<name>QOX3_STAHJ</name>